<evidence type="ECO:0000256" key="1">
    <source>
        <dbReference type="SAM" id="MobiDB-lite"/>
    </source>
</evidence>
<evidence type="ECO:0000269" key="2">
    <source>
    </source>
</evidence>
<evidence type="ECO:0000269" key="3">
    <source>
    </source>
</evidence>
<evidence type="ECO:0000305" key="4"/>
<sequence>MEPERLKFGGPRELCGAADLISQFKLVQHHEFFCKKSLPVSLSDSHYLHNVVGDTEIRKGEGMQLDQLIESISQSRETNIRIQPFDIDELQESFQLNDMTPVELPPAEKGAPTIPSKSKSESKDRDRKHKKHKDRDKDKDREHKKHKHKHKDRSKDKDKDKDRDRKKDKNGHHDSGDHSKKHHDKKRKHDGDEDLNDVQRHKKNKHKSSKLDEVGAIRVAG</sequence>
<organism>
    <name type="scientific">Arabidopsis thaliana</name>
    <name type="common">Mouse-ear cress</name>
    <dbReference type="NCBI Taxonomy" id="3702"/>
    <lineage>
        <taxon>Eukaryota</taxon>
        <taxon>Viridiplantae</taxon>
        <taxon>Streptophyta</taxon>
        <taxon>Embryophyta</taxon>
        <taxon>Tracheophyta</taxon>
        <taxon>Spermatophyta</taxon>
        <taxon>Magnoliopsida</taxon>
        <taxon>eudicotyledons</taxon>
        <taxon>Gunneridae</taxon>
        <taxon>Pentapetalae</taxon>
        <taxon>rosids</taxon>
        <taxon>malvids</taxon>
        <taxon>Brassicales</taxon>
        <taxon>Brassicaceae</taxon>
        <taxon>Camelineae</taxon>
        <taxon>Arabidopsis</taxon>
    </lineage>
</organism>
<feature type="chain" id="PRO_0000419191" description="Mediator of RNA polymerase II transcription subunit 19a">
    <location>
        <begin position="1"/>
        <end position="221"/>
    </location>
</feature>
<feature type="region of interest" description="Disordered" evidence="1">
    <location>
        <begin position="101"/>
        <end position="221"/>
    </location>
</feature>
<feature type="compositionally biased region" description="Basic residues" evidence="1">
    <location>
        <begin position="142"/>
        <end position="152"/>
    </location>
</feature>
<feature type="compositionally biased region" description="Basic and acidic residues" evidence="1">
    <location>
        <begin position="153"/>
        <end position="178"/>
    </location>
</feature>
<feature type="compositionally biased region" description="Basic residues" evidence="1">
    <location>
        <begin position="179"/>
        <end position="188"/>
    </location>
</feature>
<name>MD19A_ARATH</name>
<protein>
    <recommendedName>
        <fullName>Mediator of RNA polymerase II transcription subunit 19a</fullName>
    </recommendedName>
</protein>
<keyword id="KW-0539">Nucleus</keyword>
<keyword id="KW-1185">Reference proteome</keyword>
<keyword id="KW-0804">Transcription</keyword>
<keyword id="KW-0805">Transcription regulation</keyword>
<comment type="function">
    <text>Component of the Mediator complex, a coactivator involved in the regulated transcription of nearly all RNA polymerase II-dependent genes. Mediator functions as a bridge to convey information from gene-specific regulatory proteins to the basal RNA polymerase II transcription machinery. The Mediator complex, having a compact conformation in its free form, is recruited to promoters by direct interactions with regulatory proteins and serves for the assembly of a functional preinitiation complex with RNA polymerase II and the general transcription factors.</text>
</comment>
<comment type="subunit">
    <text evidence="2 3">Component of the Mediator complex (PubMed:17560376). Interacts with FIB2 (PubMed:30307032).</text>
</comment>
<comment type="interaction">
    <interactant intactId="EBI-1386401">
        <id>Q9FMP0</id>
    </interactant>
    <interactant intactId="EBI-1386187">
        <id>F4IXJ7</id>
        <label>MED6</label>
    </interactant>
    <organismsDiffer>false</organismsDiffer>
    <experiments>2</experiments>
</comment>
<comment type="interaction">
    <interactant intactId="EBI-1386401">
        <id>Q9FMP0</id>
    </interactant>
    <interactant intactId="EBI-16086576">
        <id>G3C9P1</id>
        <label>RxL44</label>
    </interactant>
    <organismsDiffer>true</organismsDiffer>
    <experiments>2</experiments>
</comment>
<comment type="subcellular location">
    <subcellularLocation>
        <location evidence="4">Nucleus</location>
    </subcellularLocation>
</comment>
<comment type="similarity">
    <text evidence="4">Belongs to the plant Mediator complex subunit 19 family.</text>
</comment>
<comment type="sequence caution" evidence="4">
    <conflict type="erroneous initiation">
        <sequence resource="EMBL-CDS" id="AAR20782"/>
    </conflict>
    <text>Extended N-terminus.</text>
</comment>
<comment type="sequence caution" evidence="4">
    <conflict type="erroneous initiation">
        <sequence resource="EMBL-CDS" id="AAS47657"/>
    </conflict>
    <text>Extended N-terminus.</text>
</comment>
<accession>Q9FMP0</accession>
<accession>Q6NMK7</accession>
<proteinExistence type="evidence at protein level"/>
<gene>
    <name type="primary">MED19A</name>
    <name type="synonym">MED19_1</name>
    <name type="ordered locus">At5g12230</name>
    <name type="ORF">MXC9.19</name>
</gene>
<dbReference type="EMBL" id="AB007727">
    <property type="protein sequence ID" value="BAB10041.1"/>
    <property type="molecule type" value="Genomic_DNA"/>
</dbReference>
<dbReference type="EMBL" id="CP002688">
    <property type="protein sequence ID" value="AED91778.1"/>
    <property type="molecule type" value="Genomic_DNA"/>
</dbReference>
<dbReference type="EMBL" id="BT010725">
    <property type="protein sequence ID" value="AAR20782.1"/>
    <property type="status" value="ALT_INIT"/>
    <property type="molecule type" value="mRNA"/>
</dbReference>
<dbReference type="EMBL" id="BT011651">
    <property type="protein sequence ID" value="AAS47657.1"/>
    <property type="status" value="ALT_INIT"/>
    <property type="molecule type" value="mRNA"/>
</dbReference>
<dbReference type="RefSeq" id="NP_196784.1">
    <property type="nucleotide sequence ID" value="NM_121261.3"/>
</dbReference>
<dbReference type="BioGRID" id="16375">
    <property type="interactions" value="1"/>
</dbReference>
<dbReference type="DIP" id="DIP-39929N"/>
<dbReference type="FunCoup" id="Q9FMP0">
    <property type="interactions" value="1153"/>
</dbReference>
<dbReference type="IntAct" id="Q9FMP0">
    <property type="interactions" value="3"/>
</dbReference>
<dbReference type="STRING" id="3702.Q9FMP0"/>
<dbReference type="iPTMnet" id="Q9FMP0"/>
<dbReference type="PaxDb" id="3702-AT5G12230.1"/>
<dbReference type="ProteomicsDB" id="238764"/>
<dbReference type="EnsemblPlants" id="AT5G12230.1">
    <property type="protein sequence ID" value="AT5G12230.1"/>
    <property type="gene ID" value="AT5G12230"/>
</dbReference>
<dbReference type="GeneID" id="831097"/>
<dbReference type="Gramene" id="AT5G12230.1">
    <property type="protein sequence ID" value="AT5G12230.1"/>
    <property type="gene ID" value="AT5G12230"/>
</dbReference>
<dbReference type="KEGG" id="ath:AT5G12230"/>
<dbReference type="Araport" id="AT5G12230"/>
<dbReference type="TAIR" id="AT5G12230">
    <property type="gene designation" value="MED19A"/>
</dbReference>
<dbReference type="eggNOG" id="ENOG502R8JR">
    <property type="taxonomic scope" value="Eukaryota"/>
</dbReference>
<dbReference type="HOGENOM" id="CLU_078385_1_0_1"/>
<dbReference type="InParanoid" id="Q9FMP0"/>
<dbReference type="OMA" id="KDKSAHH"/>
<dbReference type="OrthoDB" id="1920814at2759"/>
<dbReference type="PhylomeDB" id="Q9FMP0"/>
<dbReference type="PRO" id="PR:Q9FMP0"/>
<dbReference type="Proteomes" id="UP000006548">
    <property type="component" value="Chromosome 5"/>
</dbReference>
<dbReference type="ExpressionAtlas" id="Q9FMP0">
    <property type="expression patterns" value="baseline and differential"/>
</dbReference>
<dbReference type="GO" id="GO:0016592">
    <property type="term" value="C:mediator complex"/>
    <property type="evidence" value="ECO:0000314"/>
    <property type="project" value="UniProtKB"/>
</dbReference>
<dbReference type="GO" id="GO:0003712">
    <property type="term" value="F:transcription coregulator activity"/>
    <property type="evidence" value="ECO:0007669"/>
    <property type="project" value="InterPro"/>
</dbReference>
<dbReference type="GO" id="GO:0006357">
    <property type="term" value="P:regulation of transcription by RNA polymerase II"/>
    <property type="evidence" value="ECO:0007669"/>
    <property type="project" value="InterPro"/>
</dbReference>
<dbReference type="InterPro" id="IPR019403">
    <property type="entry name" value="Mediator_Med19_met"/>
</dbReference>
<dbReference type="PANTHER" id="PTHR22536">
    <property type="entry name" value="LUNG CANCER METASTASIS-RELATED LCMR1 PROTEIN"/>
    <property type="match status" value="1"/>
</dbReference>
<dbReference type="PANTHER" id="PTHR22536:SF11">
    <property type="entry name" value="MEDIATOR OF RNA POLYMERASE II TRANSCRIPTION SUBUNIT 19A"/>
    <property type="match status" value="1"/>
</dbReference>
<reference key="1">
    <citation type="journal article" date="1997" name="DNA Res.">
        <title>Structural analysis of Arabidopsis thaliana chromosome 5. III. Sequence features of the regions of 1,191,918 bp covered by seventeen physically assigned P1 clones.</title>
        <authorList>
            <person name="Nakamura Y."/>
            <person name="Sato S."/>
            <person name="Kaneko T."/>
            <person name="Kotani H."/>
            <person name="Asamizu E."/>
            <person name="Miyajima N."/>
            <person name="Tabata S."/>
        </authorList>
    </citation>
    <scope>NUCLEOTIDE SEQUENCE [LARGE SCALE GENOMIC DNA]</scope>
    <source>
        <strain>cv. Columbia</strain>
    </source>
</reference>
<reference key="2">
    <citation type="journal article" date="2017" name="Plant J.">
        <title>Araport11: a complete reannotation of the Arabidopsis thaliana reference genome.</title>
        <authorList>
            <person name="Cheng C.Y."/>
            <person name="Krishnakumar V."/>
            <person name="Chan A.P."/>
            <person name="Thibaud-Nissen F."/>
            <person name="Schobel S."/>
            <person name="Town C.D."/>
        </authorList>
    </citation>
    <scope>GENOME REANNOTATION</scope>
    <source>
        <strain>cv. Columbia</strain>
    </source>
</reference>
<reference key="3">
    <citation type="submission" date="2004-02" db="EMBL/GenBank/DDBJ databases">
        <title>Arabidopsis ORF clones.</title>
        <authorList>
            <person name="Kim C.J."/>
            <person name="Chen H."/>
            <person name="Cheuk R."/>
            <person name="Shinn P."/>
            <person name="Ecker J.R."/>
        </authorList>
    </citation>
    <scope>NUCLEOTIDE SEQUENCE [LARGE SCALE MRNA]</scope>
</reference>
<reference key="4">
    <citation type="journal article" date="2007" name="Mol. Cell">
        <title>Purification of a plant mediator from Arabidopsis thaliana identifies PFT1 as the Med25 subunit.</title>
        <authorList>
            <person name="Baeckstroem S."/>
            <person name="Elfving N."/>
            <person name="Nilsson R."/>
            <person name="Wingsle G."/>
            <person name="Bjoerklund S."/>
        </authorList>
    </citation>
    <scope>IDENTIFICATION BY MASS SPECTROMETRY</scope>
    <scope>SUBUNIT</scope>
    <scope>NOMENCLATURE</scope>
</reference>
<reference key="5">
    <citation type="journal article" date="2011" name="Plant Physiol.">
        <title>The Mediator complex in plants: structure, phylogeny, and expression profiling of representative genes in a dicot (Arabidopsis) and a monocot (rice) during reproduction and abiotic stress.</title>
        <authorList>
            <person name="Mathur S."/>
            <person name="Vyas S."/>
            <person name="Kapoor S."/>
            <person name="Tyagi A.K."/>
        </authorList>
    </citation>
    <scope>IDENTIFICATION</scope>
    <scope>NOMENCLATURE</scope>
</reference>
<reference key="6">
    <citation type="journal article" date="2019" name="New Phytol.">
        <title>ELF18-INDUCED LONG NONCODING RNA 1 evicts fibrillarin from mediator subunit to enhance PATHOGENESIS-RELATED GENE 1 (PR1) expression.</title>
        <authorList>
            <person name="Seo J.S."/>
            <person name="Diloknawarit P."/>
            <person name="Park B.S."/>
            <person name="Chua N.H."/>
        </authorList>
    </citation>
    <scope>INTERACTION WITH FIB2</scope>
</reference>